<name>OR1D2_PONPY</name>
<comment type="function">
    <text evidence="3">Odorant receptor.</text>
</comment>
<comment type="subcellular location">
    <subcellularLocation>
        <location>Cell membrane</location>
        <topology>Multi-pass membrane protein</topology>
    </subcellularLocation>
</comment>
<comment type="similarity">
    <text evidence="2">Belongs to the G-protein coupled receptor 1 family.</text>
</comment>
<organism>
    <name type="scientific">Pongo pygmaeus</name>
    <name type="common">Bornean orangutan</name>
    <dbReference type="NCBI Taxonomy" id="9600"/>
    <lineage>
        <taxon>Eukaryota</taxon>
        <taxon>Metazoa</taxon>
        <taxon>Chordata</taxon>
        <taxon>Craniata</taxon>
        <taxon>Vertebrata</taxon>
        <taxon>Euteleostomi</taxon>
        <taxon>Mammalia</taxon>
        <taxon>Eutheria</taxon>
        <taxon>Euarchontoglires</taxon>
        <taxon>Primates</taxon>
        <taxon>Haplorrhini</taxon>
        <taxon>Catarrhini</taxon>
        <taxon>Hominidae</taxon>
        <taxon>Pongo</taxon>
    </lineage>
</organism>
<keyword id="KW-1003">Cell membrane</keyword>
<keyword id="KW-1015">Disulfide bond</keyword>
<keyword id="KW-0297">G-protein coupled receptor</keyword>
<keyword id="KW-0325">Glycoprotein</keyword>
<keyword id="KW-0472">Membrane</keyword>
<keyword id="KW-0552">Olfaction</keyword>
<keyword id="KW-0675">Receptor</keyword>
<keyword id="KW-0716">Sensory transduction</keyword>
<keyword id="KW-0807">Transducer</keyword>
<keyword id="KW-0812">Transmembrane</keyword>
<keyword id="KW-1133">Transmembrane helix</keyword>
<sequence>MDGGNQSEGSEFLLLGMSESPEQQRILFWMFLSMYLVTVLGNVLIILAISSDSRLHTPMYFFLANLSFTDLFFVTNTIPKMLVNLQSQDKAISYAGCLTQLYFLLSLVTLDNLILAVMAYDRYVAICCPLHYVTAMSPRLCILLLSLCWVFSVLYGLIHTLLMTRVTFCGSRKIHYLFCEMYFLLRLACSNIQINHTVLXATGCFIFLIPLGFMIXSYARIVRAILRIPSATGKYKAFSTCASHLAVVSLFYGTLGMVYLQPLQTYSTKDSVATVMYAVVTPMMNPFIYSLRNKDIHGALGRLLQGKAFQKLT</sequence>
<gene>
    <name type="primary">OR1D2</name>
</gene>
<feature type="chain" id="PRO_0000285557" description="Olfactory receptor 1D2">
    <location>
        <begin position="1"/>
        <end position="313"/>
    </location>
</feature>
<feature type="topological domain" description="Extracellular" evidence="1">
    <location>
        <begin position="1"/>
        <end position="25"/>
    </location>
</feature>
<feature type="transmembrane region" description="Helical; Name=1" evidence="1">
    <location>
        <begin position="26"/>
        <end position="49"/>
    </location>
</feature>
<feature type="topological domain" description="Cytoplasmic" evidence="1">
    <location>
        <begin position="50"/>
        <end position="57"/>
    </location>
</feature>
<feature type="transmembrane region" description="Helical; Name=2" evidence="1">
    <location>
        <begin position="58"/>
        <end position="79"/>
    </location>
</feature>
<feature type="topological domain" description="Extracellular" evidence="1">
    <location>
        <begin position="80"/>
        <end position="100"/>
    </location>
</feature>
<feature type="transmembrane region" description="Helical; Name=3" evidence="1">
    <location>
        <begin position="101"/>
        <end position="120"/>
    </location>
</feature>
<feature type="topological domain" description="Cytoplasmic" evidence="1">
    <location>
        <begin position="121"/>
        <end position="139"/>
    </location>
</feature>
<feature type="transmembrane region" description="Helical; Name=4" evidence="1">
    <location>
        <begin position="140"/>
        <end position="158"/>
    </location>
</feature>
<feature type="topological domain" description="Extracellular" evidence="1">
    <location>
        <begin position="159"/>
        <end position="196"/>
    </location>
</feature>
<feature type="transmembrane region" description="Helical; Name=5" evidence="1">
    <location>
        <begin position="197"/>
        <end position="219"/>
    </location>
</feature>
<feature type="topological domain" description="Cytoplasmic" evidence="1">
    <location>
        <begin position="220"/>
        <end position="236"/>
    </location>
</feature>
<feature type="transmembrane region" description="Helical; Name=6" evidence="1">
    <location>
        <begin position="237"/>
        <end position="259"/>
    </location>
</feature>
<feature type="topological domain" description="Extracellular" evidence="1">
    <location>
        <begin position="260"/>
        <end position="271"/>
    </location>
</feature>
<feature type="transmembrane region" description="Helical; Name=7" evidence="1">
    <location>
        <begin position="272"/>
        <end position="291"/>
    </location>
</feature>
<feature type="topological domain" description="Cytoplasmic" evidence="1">
    <location>
        <begin position="292"/>
        <end position="313"/>
    </location>
</feature>
<feature type="glycosylation site" description="N-linked (GlcNAc...) asparagine" evidence="1">
    <location>
        <position position="5"/>
    </location>
</feature>
<feature type="glycosylation site" description="N-linked (GlcNAc...) asparagine" evidence="1">
    <location>
        <position position="195"/>
    </location>
</feature>
<feature type="disulfide bond" evidence="2">
    <location>
        <begin position="97"/>
        <end position="189"/>
    </location>
</feature>
<dbReference type="EMBL" id="AF101767">
    <property type="protein sequence ID" value="AAF03342.1"/>
    <property type="molecule type" value="Genomic_DNA"/>
</dbReference>
<dbReference type="GlyCosmos" id="Q9TU84">
    <property type="glycosylation" value="2 sites, No reported glycans"/>
</dbReference>
<dbReference type="GO" id="GO:0005886">
    <property type="term" value="C:plasma membrane"/>
    <property type="evidence" value="ECO:0007669"/>
    <property type="project" value="UniProtKB-SubCell"/>
</dbReference>
<dbReference type="GO" id="GO:0004930">
    <property type="term" value="F:G protein-coupled receptor activity"/>
    <property type="evidence" value="ECO:0007669"/>
    <property type="project" value="UniProtKB-KW"/>
</dbReference>
<dbReference type="GO" id="GO:0004984">
    <property type="term" value="F:olfactory receptor activity"/>
    <property type="evidence" value="ECO:0007669"/>
    <property type="project" value="InterPro"/>
</dbReference>
<dbReference type="CDD" id="cd15918">
    <property type="entry name" value="7tmA_OR1_7-like"/>
    <property type="match status" value="1"/>
</dbReference>
<dbReference type="FunFam" id="1.20.1070.10:FF:000009">
    <property type="entry name" value="Olfactory receptor"/>
    <property type="match status" value="1"/>
</dbReference>
<dbReference type="Gene3D" id="1.20.1070.10">
    <property type="entry name" value="Rhodopsin 7-helix transmembrane proteins"/>
    <property type="match status" value="1"/>
</dbReference>
<dbReference type="InterPro" id="IPR000276">
    <property type="entry name" value="GPCR_Rhodpsn"/>
</dbReference>
<dbReference type="InterPro" id="IPR017452">
    <property type="entry name" value="GPCR_Rhodpsn_7TM"/>
</dbReference>
<dbReference type="InterPro" id="IPR000725">
    <property type="entry name" value="Olfact_rcpt"/>
</dbReference>
<dbReference type="PANTHER" id="PTHR48001">
    <property type="entry name" value="OLFACTORY RECEPTOR"/>
    <property type="match status" value="1"/>
</dbReference>
<dbReference type="Pfam" id="PF13853">
    <property type="entry name" value="7tm_4"/>
    <property type="match status" value="1"/>
</dbReference>
<dbReference type="PRINTS" id="PR00237">
    <property type="entry name" value="GPCRRHODOPSN"/>
</dbReference>
<dbReference type="PRINTS" id="PR00245">
    <property type="entry name" value="OLFACTORYR"/>
</dbReference>
<dbReference type="SUPFAM" id="SSF81321">
    <property type="entry name" value="Family A G protein-coupled receptor-like"/>
    <property type="match status" value="1"/>
</dbReference>
<dbReference type="PROSITE" id="PS00237">
    <property type="entry name" value="G_PROTEIN_RECEP_F1_1"/>
    <property type="match status" value="1"/>
</dbReference>
<dbReference type="PROSITE" id="PS50262">
    <property type="entry name" value="G_PROTEIN_RECEP_F1_2"/>
    <property type="match status" value="1"/>
</dbReference>
<evidence type="ECO:0000255" key="1"/>
<evidence type="ECO:0000255" key="2">
    <source>
        <dbReference type="PROSITE-ProRule" id="PRU00521"/>
    </source>
</evidence>
<evidence type="ECO:0000305" key="3"/>
<proteinExistence type="inferred from homology"/>
<accession>Q9TU84</accession>
<reference key="1">
    <citation type="journal article" date="1999" name="Genomics">
        <title>Primate evolution of an olfactory receptor cluster: diversification by gene conversion and recent emergence of pseudogenes.</title>
        <authorList>
            <person name="Sharon D."/>
            <person name="Glusman G."/>
            <person name="Pilpel Y."/>
            <person name="Khen M."/>
            <person name="Gruetzner F."/>
            <person name="Haaf T."/>
            <person name="Lancet D."/>
        </authorList>
    </citation>
    <scope>NUCLEOTIDE SEQUENCE [GENOMIC DNA]</scope>
</reference>
<protein>
    <recommendedName>
        <fullName>Olfactory receptor 1D2</fullName>
    </recommendedName>
</protein>